<keyword id="KW-0028">Amino-acid biosynthesis</keyword>
<keyword id="KW-0963">Cytoplasm</keyword>
<keyword id="KW-0315">Glutamine amidotransferase</keyword>
<keyword id="KW-0368">Histidine biosynthesis</keyword>
<keyword id="KW-0378">Hydrolase</keyword>
<keyword id="KW-0456">Lyase</keyword>
<keyword id="KW-1185">Reference proteome</keyword>
<comment type="function">
    <text evidence="1">IGPS catalyzes the conversion of PRFAR and glutamine to IGP, AICAR and glutamate. The HisH subunit catalyzes the hydrolysis of glutamine to glutamate and ammonia as part of the synthesis of IGP and AICAR. The resulting ammonia molecule is channeled to the active site of HisF.</text>
</comment>
<comment type="catalytic activity">
    <reaction evidence="1">
        <text>5-[(5-phospho-1-deoxy-D-ribulos-1-ylimino)methylamino]-1-(5-phospho-beta-D-ribosyl)imidazole-4-carboxamide + L-glutamine = D-erythro-1-(imidazol-4-yl)glycerol 3-phosphate + 5-amino-1-(5-phospho-beta-D-ribosyl)imidazole-4-carboxamide + L-glutamate + H(+)</text>
        <dbReference type="Rhea" id="RHEA:24793"/>
        <dbReference type="ChEBI" id="CHEBI:15378"/>
        <dbReference type="ChEBI" id="CHEBI:29985"/>
        <dbReference type="ChEBI" id="CHEBI:58278"/>
        <dbReference type="ChEBI" id="CHEBI:58359"/>
        <dbReference type="ChEBI" id="CHEBI:58475"/>
        <dbReference type="ChEBI" id="CHEBI:58525"/>
        <dbReference type="EC" id="4.3.2.10"/>
    </reaction>
</comment>
<comment type="catalytic activity">
    <reaction evidence="1">
        <text>L-glutamine + H2O = L-glutamate + NH4(+)</text>
        <dbReference type="Rhea" id="RHEA:15889"/>
        <dbReference type="ChEBI" id="CHEBI:15377"/>
        <dbReference type="ChEBI" id="CHEBI:28938"/>
        <dbReference type="ChEBI" id="CHEBI:29985"/>
        <dbReference type="ChEBI" id="CHEBI:58359"/>
        <dbReference type="EC" id="3.5.1.2"/>
    </reaction>
</comment>
<comment type="pathway">
    <text evidence="1">Amino-acid biosynthesis; L-histidine biosynthesis; L-histidine from 5-phospho-alpha-D-ribose 1-diphosphate: step 5/9.</text>
</comment>
<comment type="subunit">
    <text evidence="1">Heterodimer of HisH and HisF.</text>
</comment>
<comment type="subcellular location">
    <subcellularLocation>
        <location evidence="1">Cytoplasm</location>
    </subcellularLocation>
</comment>
<proteinExistence type="inferred from homology"/>
<name>HIS5_BACAN</name>
<protein>
    <recommendedName>
        <fullName evidence="1">Imidazole glycerol phosphate synthase subunit HisH</fullName>
        <ecNumber evidence="1">4.3.2.10</ecNumber>
    </recommendedName>
    <alternativeName>
        <fullName evidence="1">IGP synthase glutaminase subunit</fullName>
        <ecNumber evidence="1">3.5.1.2</ecNumber>
    </alternativeName>
    <alternativeName>
        <fullName evidence="1">IGP synthase subunit HisH</fullName>
    </alternativeName>
    <alternativeName>
        <fullName evidence="1">ImGP synthase subunit HisH</fullName>
        <shortName evidence="1">IGPS subunit HisH</shortName>
    </alternativeName>
</protein>
<sequence length="209" mass="23286">MIAIIDYGMGNIRSVEQALKYIGAAYIVTSDKEEIFRSDGVILPGVGAFPKAMDILEEKDLVRVLQEIGRSRKPLLGICLGMQLLFEKSEELQDCNGLSLLPGVIRKLKVPYKIPHMGWNELKKEGEIALWNGVEDGSFVYYVHSYYADCPNEIVYGISDYGVKVPGFVAKGNIYGAQFHPEKSGDIGMQMLKNFKGVVETWKSSQLSI</sequence>
<reference key="1">
    <citation type="journal article" date="2003" name="Nature">
        <title>The genome sequence of Bacillus anthracis Ames and comparison to closely related bacteria.</title>
        <authorList>
            <person name="Read T.D."/>
            <person name="Peterson S.N."/>
            <person name="Tourasse N.J."/>
            <person name="Baillie L.W."/>
            <person name="Paulsen I.T."/>
            <person name="Nelson K.E."/>
            <person name="Tettelin H."/>
            <person name="Fouts D.E."/>
            <person name="Eisen J.A."/>
            <person name="Gill S.R."/>
            <person name="Holtzapple E.K."/>
            <person name="Okstad O.A."/>
            <person name="Helgason E."/>
            <person name="Rilstone J."/>
            <person name="Wu M."/>
            <person name="Kolonay J.F."/>
            <person name="Beanan M.J."/>
            <person name="Dodson R.J."/>
            <person name="Brinkac L.M."/>
            <person name="Gwinn M.L."/>
            <person name="DeBoy R.T."/>
            <person name="Madpu R."/>
            <person name="Daugherty S.C."/>
            <person name="Durkin A.S."/>
            <person name="Haft D.H."/>
            <person name="Nelson W.C."/>
            <person name="Peterson J.D."/>
            <person name="Pop M."/>
            <person name="Khouri H.M."/>
            <person name="Radune D."/>
            <person name="Benton J.L."/>
            <person name="Mahamoud Y."/>
            <person name="Jiang L."/>
            <person name="Hance I.R."/>
            <person name="Weidman J.F."/>
            <person name="Berry K.J."/>
            <person name="Plaut R.D."/>
            <person name="Wolf A.M."/>
            <person name="Watkins K.L."/>
            <person name="Nierman W.C."/>
            <person name="Hazen A."/>
            <person name="Cline R.T."/>
            <person name="Redmond C."/>
            <person name="Thwaite J.E."/>
            <person name="White O."/>
            <person name="Salzberg S.L."/>
            <person name="Thomason B."/>
            <person name="Friedlander A.M."/>
            <person name="Koehler T.M."/>
            <person name="Hanna P.C."/>
            <person name="Kolstoe A.-B."/>
            <person name="Fraser C.M."/>
        </authorList>
    </citation>
    <scope>NUCLEOTIDE SEQUENCE [LARGE SCALE GENOMIC DNA]</scope>
    <source>
        <strain>Ames / isolate Porton</strain>
    </source>
</reference>
<reference key="2">
    <citation type="journal article" date="2009" name="J. Bacteriol.">
        <title>The complete genome sequence of Bacillus anthracis Ames 'Ancestor'.</title>
        <authorList>
            <person name="Ravel J."/>
            <person name="Jiang L."/>
            <person name="Stanley S.T."/>
            <person name="Wilson M.R."/>
            <person name="Decker R.S."/>
            <person name="Read T.D."/>
            <person name="Worsham P."/>
            <person name="Keim P.S."/>
            <person name="Salzberg S.L."/>
            <person name="Fraser-Liggett C.M."/>
            <person name="Rasko D.A."/>
        </authorList>
    </citation>
    <scope>NUCLEOTIDE SEQUENCE [LARGE SCALE GENOMIC DNA]</scope>
    <source>
        <strain>Ames ancestor</strain>
    </source>
</reference>
<reference key="3">
    <citation type="submission" date="2004-01" db="EMBL/GenBank/DDBJ databases">
        <title>Complete genome sequence of Bacillus anthracis Sterne.</title>
        <authorList>
            <person name="Brettin T.S."/>
            <person name="Bruce D."/>
            <person name="Challacombe J.F."/>
            <person name="Gilna P."/>
            <person name="Han C."/>
            <person name="Hill K."/>
            <person name="Hitchcock P."/>
            <person name="Jackson P."/>
            <person name="Keim P."/>
            <person name="Longmire J."/>
            <person name="Lucas S."/>
            <person name="Okinaka R."/>
            <person name="Richardson P."/>
            <person name="Rubin E."/>
            <person name="Tice H."/>
        </authorList>
    </citation>
    <scope>NUCLEOTIDE SEQUENCE [LARGE SCALE GENOMIC DNA]</scope>
    <source>
        <strain>Sterne</strain>
    </source>
</reference>
<organism>
    <name type="scientific">Bacillus anthracis</name>
    <dbReference type="NCBI Taxonomy" id="1392"/>
    <lineage>
        <taxon>Bacteria</taxon>
        <taxon>Bacillati</taxon>
        <taxon>Bacillota</taxon>
        <taxon>Bacilli</taxon>
        <taxon>Bacillales</taxon>
        <taxon>Bacillaceae</taxon>
        <taxon>Bacillus</taxon>
        <taxon>Bacillus cereus group</taxon>
    </lineage>
</organism>
<accession>Q81T60</accession>
<accession>Q6I1E3</accession>
<accession>Q6KV89</accession>
<dbReference type="EC" id="4.3.2.10" evidence="1"/>
<dbReference type="EC" id="3.5.1.2" evidence="1"/>
<dbReference type="EMBL" id="AE016879">
    <property type="protein sequence ID" value="AAP25371.1"/>
    <property type="molecule type" value="Genomic_DNA"/>
</dbReference>
<dbReference type="EMBL" id="AE017334">
    <property type="protein sequence ID" value="AAT30524.1"/>
    <property type="molecule type" value="Genomic_DNA"/>
</dbReference>
<dbReference type="EMBL" id="AE017225">
    <property type="protein sequence ID" value="AAT53639.1"/>
    <property type="molecule type" value="Genomic_DNA"/>
</dbReference>
<dbReference type="RefSeq" id="NP_843885.1">
    <property type="nucleotide sequence ID" value="NC_003997.3"/>
</dbReference>
<dbReference type="RefSeq" id="WP_000560343.1">
    <property type="nucleotide sequence ID" value="NZ_WXXJ01000017.1"/>
</dbReference>
<dbReference type="RefSeq" id="YP_027588.1">
    <property type="nucleotide sequence ID" value="NC_005945.1"/>
</dbReference>
<dbReference type="SMR" id="Q81T60"/>
<dbReference type="STRING" id="261594.GBAA_1428"/>
<dbReference type="DNASU" id="1085011"/>
<dbReference type="GeneID" id="45021407"/>
<dbReference type="KEGG" id="ban:BA_1428"/>
<dbReference type="KEGG" id="banh:HYU01_07240"/>
<dbReference type="KEGG" id="bar:GBAA_1428"/>
<dbReference type="KEGG" id="bat:BAS1319"/>
<dbReference type="PATRIC" id="fig|198094.11.peg.1401"/>
<dbReference type="eggNOG" id="COG0118">
    <property type="taxonomic scope" value="Bacteria"/>
</dbReference>
<dbReference type="HOGENOM" id="CLU_071837_2_2_9"/>
<dbReference type="OMA" id="WVYFVHS"/>
<dbReference type="OrthoDB" id="9807137at2"/>
<dbReference type="UniPathway" id="UPA00031">
    <property type="reaction ID" value="UER00010"/>
</dbReference>
<dbReference type="Proteomes" id="UP000000427">
    <property type="component" value="Chromosome"/>
</dbReference>
<dbReference type="Proteomes" id="UP000000594">
    <property type="component" value="Chromosome"/>
</dbReference>
<dbReference type="GO" id="GO:0005737">
    <property type="term" value="C:cytoplasm"/>
    <property type="evidence" value="ECO:0007669"/>
    <property type="project" value="UniProtKB-SubCell"/>
</dbReference>
<dbReference type="GO" id="GO:0004359">
    <property type="term" value="F:glutaminase activity"/>
    <property type="evidence" value="ECO:0007669"/>
    <property type="project" value="UniProtKB-EC"/>
</dbReference>
<dbReference type="GO" id="GO:0000107">
    <property type="term" value="F:imidazoleglycerol-phosphate synthase activity"/>
    <property type="evidence" value="ECO:0007669"/>
    <property type="project" value="UniProtKB-UniRule"/>
</dbReference>
<dbReference type="GO" id="GO:0016829">
    <property type="term" value="F:lyase activity"/>
    <property type="evidence" value="ECO:0007669"/>
    <property type="project" value="UniProtKB-KW"/>
</dbReference>
<dbReference type="GO" id="GO:0000105">
    <property type="term" value="P:L-histidine biosynthetic process"/>
    <property type="evidence" value="ECO:0007669"/>
    <property type="project" value="UniProtKB-UniRule"/>
</dbReference>
<dbReference type="CDD" id="cd01748">
    <property type="entry name" value="GATase1_IGP_Synthase"/>
    <property type="match status" value="1"/>
</dbReference>
<dbReference type="FunFam" id="3.40.50.880:FF:000028">
    <property type="entry name" value="Imidazole glycerol phosphate synthase subunit HisH"/>
    <property type="match status" value="1"/>
</dbReference>
<dbReference type="Gene3D" id="3.40.50.880">
    <property type="match status" value="1"/>
</dbReference>
<dbReference type="HAMAP" id="MF_00278">
    <property type="entry name" value="HisH"/>
    <property type="match status" value="1"/>
</dbReference>
<dbReference type="InterPro" id="IPR029062">
    <property type="entry name" value="Class_I_gatase-like"/>
</dbReference>
<dbReference type="InterPro" id="IPR017926">
    <property type="entry name" value="GATASE"/>
</dbReference>
<dbReference type="InterPro" id="IPR010139">
    <property type="entry name" value="Imidazole-glycPsynth_HisH"/>
</dbReference>
<dbReference type="NCBIfam" id="TIGR01855">
    <property type="entry name" value="IMP_synth_hisH"/>
    <property type="match status" value="1"/>
</dbReference>
<dbReference type="PANTHER" id="PTHR42701">
    <property type="entry name" value="IMIDAZOLE GLYCEROL PHOSPHATE SYNTHASE SUBUNIT HISH"/>
    <property type="match status" value="1"/>
</dbReference>
<dbReference type="PANTHER" id="PTHR42701:SF1">
    <property type="entry name" value="IMIDAZOLE GLYCEROL PHOSPHATE SYNTHASE SUBUNIT HISH"/>
    <property type="match status" value="1"/>
</dbReference>
<dbReference type="Pfam" id="PF00117">
    <property type="entry name" value="GATase"/>
    <property type="match status" value="1"/>
</dbReference>
<dbReference type="PIRSF" id="PIRSF000495">
    <property type="entry name" value="Amidotransf_hisH"/>
    <property type="match status" value="1"/>
</dbReference>
<dbReference type="SUPFAM" id="SSF52317">
    <property type="entry name" value="Class I glutamine amidotransferase-like"/>
    <property type="match status" value="1"/>
</dbReference>
<dbReference type="PROSITE" id="PS51273">
    <property type="entry name" value="GATASE_TYPE_1"/>
    <property type="match status" value="1"/>
</dbReference>
<gene>
    <name evidence="1" type="primary">hisH</name>
    <name type="ordered locus">BA_1428</name>
    <name type="ordered locus">GBAA_1428</name>
    <name type="ordered locus">BAS1319</name>
</gene>
<feature type="chain" id="PRO_0000152337" description="Imidazole glycerol phosphate synthase subunit HisH">
    <location>
        <begin position="1"/>
        <end position="209"/>
    </location>
</feature>
<feature type="domain" description="Glutamine amidotransferase type-1" evidence="1">
    <location>
        <begin position="1"/>
        <end position="205"/>
    </location>
</feature>
<feature type="active site" description="Nucleophile" evidence="1">
    <location>
        <position position="79"/>
    </location>
</feature>
<feature type="active site" evidence="1">
    <location>
        <position position="180"/>
    </location>
</feature>
<feature type="active site" evidence="1">
    <location>
        <position position="182"/>
    </location>
</feature>
<evidence type="ECO:0000255" key="1">
    <source>
        <dbReference type="HAMAP-Rule" id="MF_00278"/>
    </source>
</evidence>